<name>PUIB_WHEAT</name>
<keyword id="KW-0044">Antibiotic</keyword>
<keyword id="KW-0929">Antimicrobial</keyword>
<keyword id="KW-0903">Direct protein sequencing</keyword>
<keyword id="KW-1015">Disulfide bond</keyword>
<keyword id="KW-0472">Membrane</keyword>
<keyword id="KW-0611">Plant defense</keyword>
<keyword id="KW-1185">Reference proteome</keyword>
<keyword id="KW-0964">Secreted</keyword>
<keyword id="KW-0732">Signal</keyword>
<keyword id="KW-0800">Toxin</keyword>
<gene>
    <name type="primary">PINB</name>
</gene>
<dbReference type="EMBL" id="X69912">
    <property type="protein sequence ID" value="CAA49537.1"/>
    <property type="molecule type" value="mRNA"/>
</dbReference>
<dbReference type="EMBL" id="AJ302100">
    <property type="protein sequence ID" value="CAC33791.1"/>
    <property type="molecule type" value="Genomic_DNA"/>
</dbReference>
<dbReference type="EMBL" id="DQ363913">
    <property type="protein sequence ID" value="ABD72479.1"/>
    <property type="molecule type" value="Genomic_DNA"/>
</dbReference>
<dbReference type="EMBL" id="DQ363914">
    <property type="protein sequence ID" value="ABD72480.1"/>
    <property type="molecule type" value="Genomic_DNA"/>
</dbReference>
<dbReference type="EMBL" id="AB177390">
    <property type="protein sequence ID" value="BAD21119.1"/>
    <property type="molecule type" value="Genomic_DNA"/>
</dbReference>
<dbReference type="EMBL" id="AB180737">
    <property type="protein sequence ID" value="BAD22738.1"/>
    <property type="molecule type" value="Genomic_DNA"/>
</dbReference>
<dbReference type="EMBL" id="AY598029">
    <property type="protein sequence ID" value="AAT40245.1"/>
    <property type="molecule type" value="Genomic_DNA"/>
</dbReference>
<dbReference type="EMBL" id="AY640304">
    <property type="protein sequence ID" value="AAT40244.1"/>
    <property type="molecule type" value="Genomic_DNA"/>
</dbReference>
<dbReference type="EMBL" id="CR626934">
    <property type="protein sequence ID" value="CAH10199.1"/>
    <property type="molecule type" value="Genomic_DNA"/>
</dbReference>
<dbReference type="EMBL" id="CT009735">
    <property type="protein sequence ID" value="CAJ15420.1"/>
    <property type="molecule type" value="Genomic_DNA"/>
</dbReference>
<dbReference type="EMBL" id="AB262660">
    <property type="protein sequence ID" value="BAE96109.1"/>
    <property type="molecule type" value="Genomic_DNA"/>
</dbReference>
<dbReference type="PIR" id="S46514">
    <property type="entry name" value="S46514"/>
</dbReference>
<dbReference type="STRING" id="4565.Q10464"/>
<dbReference type="PaxDb" id="4565-Traes_5DS_0BFE4FD87.1"/>
<dbReference type="EnsemblPlants" id="TraesJAG5D03G03025450.1">
    <property type="protein sequence ID" value="TraesJAG5D03G03025450.1.CDS1"/>
    <property type="gene ID" value="TraesJAG5D03G03025450"/>
</dbReference>
<dbReference type="EnsemblPlants" id="TraesLDM5D03G03031660.1">
    <property type="protein sequence ID" value="TraesLDM5D03G03031660.1.CDS1"/>
    <property type="gene ID" value="TraesLDM5D03G03031660"/>
</dbReference>
<dbReference type="EnsemblPlants" id="TraesNOR5D03G03061310.1">
    <property type="protein sequence ID" value="TraesNOR5D03G03061310.1.CDS1"/>
    <property type="gene ID" value="TraesNOR5D03G03061310"/>
</dbReference>
<dbReference type="Gramene" id="TraesJAG5D03G03025450.1">
    <property type="protein sequence ID" value="TraesJAG5D03G03025450.1.CDS1"/>
    <property type="gene ID" value="TraesJAG5D03G03025450"/>
</dbReference>
<dbReference type="Gramene" id="TraesLDM5D03G03031660.1">
    <property type="protein sequence ID" value="TraesLDM5D03G03031660.1.CDS1"/>
    <property type="gene ID" value="TraesLDM5D03G03031660"/>
</dbReference>
<dbReference type="Gramene" id="TraesNOR5D03G03061310.1">
    <property type="protein sequence ID" value="TraesNOR5D03G03061310.1.CDS1"/>
    <property type="gene ID" value="TraesNOR5D03G03061310"/>
</dbReference>
<dbReference type="HOGENOM" id="CLU_1621987_0_0_1"/>
<dbReference type="OMA" id="IAPHCRC"/>
<dbReference type="Proteomes" id="UP000019116">
    <property type="component" value="Unplaced"/>
</dbReference>
<dbReference type="ExpressionAtlas" id="Q10464">
    <property type="expression patterns" value="baseline"/>
</dbReference>
<dbReference type="GO" id="GO:0005576">
    <property type="term" value="C:extracellular region"/>
    <property type="evidence" value="ECO:0007669"/>
    <property type="project" value="UniProtKB-SubCell"/>
</dbReference>
<dbReference type="GO" id="GO:0016020">
    <property type="term" value="C:membrane"/>
    <property type="evidence" value="ECO:0007669"/>
    <property type="project" value="UniProtKB-SubCell"/>
</dbReference>
<dbReference type="GO" id="GO:0045735">
    <property type="term" value="F:nutrient reservoir activity"/>
    <property type="evidence" value="ECO:0007669"/>
    <property type="project" value="InterPro"/>
</dbReference>
<dbReference type="GO" id="GO:0004867">
    <property type="term" value="F:serine-type endopeptidase inhibitor activity"/>
    <property type="evidence" value="ECO:0007669"/>
    <property type="project" value="InterPro"/>
</dbReference>
<dbReference type="GO" id="GO:0090729">
    <property type="term" value="F:toxin activity"/>
    <property type="evidence" value="ECO:0007669"/>
    <property type="project" value="UniProtKB-KW"/>
</dbReference>
<dbReference type="GO" id="GO:0042742">
    <property type="term" value="P:defense response to bacterium"/>
    <property type="evidence" value="ECO:0007669"/>
    <property type="project" value="UniProtKB-KW"/>
</dbReference>
<dbReference type="CDD" id="cd00261">
    <property type="entry name" value="AAI_SS"/>
    <property type="match status" value="1"/>
</dbReference>
<dbReference type="Gene3D" id="1.10.110.10">
    <property type="entry name" value="Plant lipid-transfer and hydrophobic proteins"/>
    <property type="match status" value="1"/>
</dbReference>
<dbReference type="InterPro" id="IPR006106">
    <property type="entry name" value="Allergen/soft/tryp_amyl_inhib"/>
</dbReference>
<dbReference type="InterPro" id="IPR036312">
    <property type="entry name" value="Bifun_inhib/LTP/seed_sf"/>
</dbReference>
<dbReference type="InterPro" id="IPR016140">
    <property type="entry name" value="Bifunc_inhib/LTP/seed_store"/>
</dbReference>
<dbReference type="InterPro" id="IPR001954">
    <property type="entry name" value="Glia_glutenin"/>
</dbReference>
<dbReference type="PANTHER" id="PTHR33454">
    <property type="entry name" value="PROLAMIN PPROL 14P"/>
    <property type="match status" value="1"/>
</dbReference>
<dbReference type="PANTHER" id="PTHR33454:SF10">
    <property type="entry name" value="PUROINDOLINE-B"/>
    <property type="match status" value="1"/>
</dbReference>
<dbReference type="Pfam" id="PF00234">
    <property type="entry name" value="Tryp_alpha_amyl"/>
    <property type="match status" value="1"/>
</dbReference>
<dbReference type="PRINTS" id="PR00808">
    <property type="entry name" value="AMLASEINHBTR"/>
</dbReference>
<dbReference type="SMART" id="SM00499">
    <property type="entry name" value="AAI"/>
    <property type="match status" value="1"/>
</dbReference>
<dbReference type="SUPFAM" id="SSF47699">
    <property type="entry name" value="Bifunctional inhibitor/lipid-transfer protein/seed storage 2S albumin"/>
    <property type="match status" value="1"/>
</dbReference>
<proteinExistence type="evidence at protein level"/>
<comment type="function">
    <text evidence="2 3 4">Acts as a membranotoxin, probably through its antibacterial and antifungal activities, contributing to the defense mechanism of the plant against predators. Forms monovalent cation-selective ion channels in membranes. Has antibacterial activity against the Gram-positive bacteria S.aureus and C.michiganensis, and the Gram-negative bacteria E.coli, P.syringae pv phaseoli, A.tumefaciens and E.carotovora subsp carotovora. Acts synergistically with PINA against bacteria. Contributes to grain texture and hardness.</text>
</comment>
<comment type="subcellular location">
    <subcellularLocation>
        <location evidence="3">Membrane</location>
    </subcellularLocation>
    <subcellularLocation>
        <location evidence="3">Secreted</location>
        <location evidence="3">Extracellular space</location>
    </subcellularLocation>
</comment>
<comment type="tissue specificity">
    <text evidence="3 5 6">Endosperm and aleurone layer of developing kernels. In the aleurone layer, mainly localized to starch granules and the surface of the plasma membrane, forming a uniform layer, also abundant in the intercellular space. In the endosperm, mainly localized to starch granules and the plasma membrane, but less abundant in the intercellular space. Not found in roots or coleoptiles.</text>
</comment>
<comment type="developmental stage">
    <text evidence="5">Starts to accumulate in seeds between 8 and 12 days after flowering. Levels increase markedly between 15 and 18 days after flowering, reaching a peak between 26 and 33 days after flowering. Levels then decline rapidly at none is detected at 40 days after flowering. Not detected in germinated seeds.</text>
</comment>
<comment type="PTM">
    <text>Five disulfide bonds are present.</text>
</comment>
<comment type="mass spectrometry">
    <text>In cv. Riband.</text>
</comment>
<comment type="mass spectrometry">
    <text>In cv. Consort.</text>
</comment>
<comment type="mass spectrometry">
    <text>In cv. Hereward.</text>
</comment>
<comment type="mass spectrometry">
    <text>In cv. Hereward.</text>
</comment>
<comment type="mass spectrometry">
    <text>In cv. Soissons.</text>
</comment>
<comment type="polymorphism">
    <text>Variation in, or absence of, PINB is associated with variation in grain texture.</text>
</comment>
<protein>
    <recommendedName>
        <fullName>Puroindoline-B</fullName>
    </recommendedName>
</protein>
<organism>
    <name type="scientific">Triticum aestivum</name>
    <name type="common">Wheat</name>
    <dbReference type="NCBI Taxonomy" id="4565"/>
    <lineage>
        <taxon>Eukaryota</taxon>
        <taxon>Viridiplantae</taxon>
        <taxon>Streptophyta</taxon>
        <taxon>Embryophyta</taxon>
        <taxon>Tracheophyta</taxon>
        <taxon>Spermatophyta</taxon>
        <taxon>Magnoliopsida</taxon>
        <taxon>Liliopsida</taxon>
        <taxon>Poales</taxon>
        <taxon>Poaceae</taxon>
        <taxon>BOP clade</taxon>
        <taxon>Pooideae</taxon>
        <taxon>Triticodae</taxon>
        <taxon>Triticeae</taxon>
        <taxon>Triticinae</taxon>
        <taxon>Triticum</taxon>
    </lineage>
</organism>
<reference key="1">
    <citation type="journal article" date="1994" name="Plant Mol. Biol.">
        <title>Triticum aestivum puroindolines, two basic cystine-rich seed proteins: cDNA sequence analysis and developmental gene expression.</title>
        <authorList>
            <person name="Gautier M.-F."/>
            <person name="Aleman M.-F."/>
            <person name="Guirao A."/>
            <person name="Marion D."/>
            <person name="Joudrier P."/>
        </authorList>
    </citation>
    <scope>NUCLEOTIDE SEQUENCE [MRNA]</scope>
    <scope>TISSUE SPECIFICITY</scope>
    <scope>DEVELOPMENTAL STAGE</scope>
    <source>
        <strain>cv. Capitole</strain>
        <tissue>Seed</tissue>
    </source>
</reference>
<reference key="2">
    <citation type="journal article" date="2002" name="Euphytica">
        <title>Analysis of puroindoline a and b sequences from Triticum aestivum cv. 'Penawawa' and related dipoloid taxa.</title>
        <authorList>
            <person name="Lillemo M."/>
            <person name="Simeone M.C."/>
            <person name="Morris C.F."/>
        </authorList>
        <dbReference type="AGRICOLA" id="IND23303453"/>
    </citation>
    <scope>NUCLEOTIDE SEQUENCE [GENOMIC DNA]</scope>
    <scope>TISSUE SPECIFICITY</scope>
    <source>
        <strain>cv. Penawawa</strain>
        <tissue>Seed</tissue>
    </source>
</reference>
<reference key="3">
    <citation type="journal article" date="2006" name="J. Cereal Sci.">
        <title>Conserved regulatory elements identified from a comparative puroindoline gene sequence survey of Triticum and Aegilops diploid taxa.</title>
        <authorList>
            <person name="Simeone M.C."/>
            <person name="Gedye K.R."/>
            <person name="Mason-Gamer R."/>
            <person name="Gill B.S."/>
            <person name="Morris C.F."/>
        </authorList>
        <dbReference type="AGRICOLA" id="IND43829610"/>
    </citation>
    <scope>NUCLEOTIDE SEQUENCE [GENOMIC DNA]</scope>
    <scope>VARIANT SER-75</scope>
    <source>
        <strain>cv. Cheyenne</strain>
        <strain>cv. Chinese Spring</strain>
        <tissue>Seed</tissue>
    </source>
</reference>
<reference key="4">
    <citation type="submission" date="2004-04" db="EMBL/GenBank/DDBJ databases">
        <title>A new variation of puroindoline b in common wheat.</title>
        <authorList>
            <person name="Chang C."/>
            <person name="Li W."/>
            <person name="Li B."/>
            <person name="Liu G."/>
        </authorList>
    </citation>
    <scope>NUCLEOTIDE SEQUENCE [GENOMIC DNA]</scope>
    <source>
        <strain>cv. Jing 771</strain>
        <strain>cv. Tachun 3</strain>
        <tissue>Leaf</tissue>
    </source>
</reference>
<reference key="5">
    <citation type="submission" date="2005-06" db="EMBL/GenBank/DDBJ databases">
        <authorList>
            <consortium name="Genoscope"/>
        </authorList>
    </citation>
    <scope>NUCLEOTIDE SEQUENCE [GENOMIC DNA]</scope>
    <scope>VARIANT SER-75</scope>
    <source>
        <strain>cv. Renan</strain>
    </source>
</reference>
<reference key="6">
    <citation type="submission" date="2006-06" db="EMBL/GenBank/DDBJ databases">
        <title>Sequence analysis of Pina-D1b allele in hard wheat.</title>
        <authorList>
            <person name="Takeuchi T."/>
            <person name="Sato M."/>
            <person name="Suzuki T."/>
            <person name="Yoshimura Y."/>
            <person name="Nakamichi K."/>
            <person name="Kobayashi S."/>
            <person name="Nishimura T."/>
            <person name="Ikenaga M."/>
            <person name="Sato N."/>
        </authorList>
    </citation>
    <scope>NUCLEOTIDE SEQUENCE [GENOMIC DNA]</scope>
</reference>
<reference key="7">
    <citation type="book" date="1991" name="Gluten proteins">
        <title>Amphiphilic proteins from wheat flour: specific extraction, structure and lipid-binding properties.</title>
        <editorList>
            <person name="Bushuk W."/>
            <person name="Tkachuk R."/>
        </editorList>
        <authorList>
            <person name="Blochet J.E."/>
            <person name="Kaboulou A."/>
            <person name="Compoint J.P."/>
            <person name="Marion D."/>
        </authorList>
    </citation>
    <scope>PROTEIN SEQUENCE OF 30-148</scope>
</reference>
<reference key="8">
    <citation type="journal article" date="2003" name="Biophys. J.">
        <title>Puroindolines form ion channels in biological membranes.</title>
        <authorList>
            <person name="Charnet P."/>
            <person name="Molle G."/>
            <person name="Marion D."/>
            <person name="Rousset M."/>
            <person name="Lullien-Pellerin V."/>
        </authorList>
    </citation>
    <scope>FUNCTION</scope>
</reference>
<reference key="9">
    <citation type="journal article" date="2005" name="Plant Mol. Biol.">
        <title>Two plant puroindolines colocalize in wheat seed and in vitro synergistically fight against pathogens.</title>
        <authorList>
            <person name="Capparelli R."/>
            <person name="Amoroso M.G."/>
            <person name="Palumbo D."/>
            <person name="Iannaccone M."/>
            <person name="Faleri C."/>
            <person name="Cresti M."/>
        </authorList>
    </citation>
    <scope>FUNCTION</scope>
    <scope>SUBCELLULAR LOCATION</scope>
    <scope>TISSUE SPECIFICITY</scope>
</reference>
<reference key="10">
    <citation type="journal article" date="2006" name="FEBS J.">
        <title>Characterization of wheat puroindoline proteins.</title>
        <authorList>
            <person name="Day L."/>
            <person name="Bhandari D.G."/>
            <person name="Greenwell P."/>
            <person name="Leonard S.A."/>
            <person name="Schofield J.D."/>
        </authorList>
    </citation>
    <scope>FUNCTION</scope>
    <scope>MASS SPECTROMETRY</scope>
    <scope>POLYMORPHISM</scope>
    <scope>VARIANTS ARG-73; SER-75 AND PRO-89</scope>
</reference>
<evidence type="ECO:0000255" key="1"/>
<evidence type="ECO:0000269" key="2">
    <source>
    </source>
</evidence>
<evidence type="ECO:0000269" key="3">
    <source>
    </source>
</evidence>
<evidence type="ECO:0000269" key="4">
    <source>
    </source>
</evidence>
<evidence type="ECO:0000269" key="5">
    <source>
    </source>
</evidence>
<evidence type="ECO:0000269" key="6">
    <source ref="2"/>
</evidence>
<evidence type="ECO:0000269" key="7">
    <source ref="3"/>
</evidence>
<evidence type="ECO:0000269" key="8">
    <source ref="5"/>
</evidence>
<evidence type="ECO:0000269" key="9">
    <source ref="7"/>
</evidence>
<evidence type="ECO:0000305" key="10"/>
<accession>Q10464</accession>
<accession>Q546N5</accession>
<accession>Q5BHS0</accession>
<accession>Q6ISY2</accession>
<accession>Q6J5P4</accession>
<sequence>MKTLFLLALLALVASTTFAQYSEVGGWYNEVGGGGGSQQCPQERPKLSSCKDYVMERCFTMKDFPVTWPTKWWKGGCEHEVREKCCKQLSQIAPQCRCDSIRRVIQGRLGGFLGIWRGEVFKQLQRAQSLPSKCNMGADCKFPSGYYW</sequence>
<feature type="signal peptide" evidence="1">
    <location>
        <begin position="1"/>
        <end position="19"/>
    </location>
</feature>
<feature type="propeptide" id="PRO_0000032288" evidence="9">
    <location>
        <begin position="20"/>
        <end position="29"/>
    </location>
</feature>
<feature type="chain" id="PRO_0000032289" description="Puroindoline-B">
    <location>
        <begin position="30"/>
        <end position="148"/>
    </location>
</feature>
<feature type="sequence variant" description="Found in hard wheats, including cv. Soissons." evidence="4">
    <original>W</original>
    <variation>R</variation>
    <location>
        <position position="73"/>
    </location>
</feature>
<feature type="sequence variant" description="Found in hard wheats, including cv. Buster and cv. Shamrock." evidence="4 7 8">
    <original>G</original>
    <variation>S</variation>
    <location>
        <position position="75"/>
    </location>
</feature>
<feature type="sequence variant" description="Found in cv. Chablis, but no mature PINB protein is found in this cultivar." evidence="4">
    <original>L</original>
    <variation>P</variation>
    <location>
        <position position="89"/>
    </location>
</feature>
<feature type="sequence conflict" description="In Ref. 4; BAD21119/AAT40245." evidence="10" ref="4">
    <original>AL</original>
    <variation>TI</variation>
    <location>
        <begin position="8"/>
        <end position="9"/>
    </location>
</feature>
<feature type="sequence conflict" description="In Ref. 4; BAD22738/AAT40244." evidence="10" ref="4">
    <original>S</original>
    <variation>I</variation>
    <location>
        <position position="144"/>
    </location>
</feature>